<reference key="1">
    <citation type="journal article" date="2004" name="J. Infect. Dis.">
        <title>Progress toward characterization of the group A Streptococcus metagenome: complete genome sequence of a macrolide-resistant serotype M6 strain.</title>
        <authorList>
            <person name="Banks D.J."/>
            <person name="Porcella S.F."/>
            <person name="Barbian K.D."/>
            <person name="Beres S.B."/>
            <person name="Philips L.E."/>
            <person name="Voyich J.M."/>
            <person name="DeLeo F.R."/>
            <person name="Martin J.M."/>
            <person name="Somerville G.A."/>
            <person name="Musser J.M."/>
        </authorList>
    </citation>
    <scope>NUCLEOTIDE SEQUENCE [LARGE SCALE GENOMIC DNA]</scope>
    <source>
        <strain>ATCC BAA-946 / MGAS10394</strain>
    </source>
</reference>
<name>ACKA_STRP6</name>
<sequence>MSKTIAINAGSSSLKWQLYQMPEEEVLAQGIIERIGLKDSISTVKYDGKKEEQILDIHDHTEAVKILLNDLIHFGIIAAYDEITGVGHRVVAGGELFKESVVVNDKVLEHIEELSVLAPLHNPGAAAGIRAFRDILPDITSVCVFDTSFHTSMAKHTYLYPIPQKYYTDYKVRKYGAHGTSHKYVAQEAAKMLGRPLEELKLITAHIGNGVSITANYHGKSVDTSMGFTPLAGPMMGTRSGDIDPAIIPYLIEQDPELKDAADVVNMLNKKSGLSGVSGISSDMRDIEAGLQEDNPDAVLAYNIFIDRIKKCIGQYFAVLNGADALVFTAGMGENAPLMRQDVIGGLTWFGMDIDPEKNVFGYRGDISTPESKVKVLVISTDEELCIARDVERLKNTK</sequence>
<proteinExistence type="inferred from homology"/>
<organism>
    <name type="scientific">Streptococcus pyogenes serotype M6 (strain ATCC BAA-946 / MGAS10394)</name>
    <dbReference type="NCBI Taxonomy" id="286636"/>
    <lineage>
        <taxon>Bacteria</taxon>
        <taxon>Bacillati</taxon>
        <taxon>Bacillota</taxon>
        <taxon>Bacilli</taxon>
        <taxon>Lactobacillales</taxon>
        <taxon>Streptococcaceae</taxon>
        <taxon>Streptococcus</taxon>
    </lineage>
</organism>
<keyword id="KW-0067">ATP-binding</keyword>
<keyword id="KW-0963">Cytoplasm</keyword>
<keyword id="KW-0418">Kinase</keyword>
<keyword id="KW-0460">Magnesium</keyword>
<keyword id="KW-0479">Metal-binding</keyword>
<keyword id="KW-0547">Nucleotide-binding</keyword>
<keyword id="KW-0808">Transferase</keyword>
<dbReference type="EC" id="2.7.2.1" evidence="1"/>
<dbReference type="EMBL" id="CP000003">
    <property type="protein sequence ID" value="AAT86277.1"/>
    <property type="molecule type" value="Genomic_DNA"/>
</dbReference>
<dbReference type="RefSeq" id="WP_002986533.1">
    <property type="nucleotide sequence ID" value="NC_006086.1"/>
</dbReference>
<dbReference type="SMR" id="Q5XE86"/>
<dbReference type="KEGG" id="spa:M6_Spy0142"/>
<dbReference type="HOGENOM" id="CLU_020352_0_1_9"/>
<dbReference type="UniPathway" id="UPA00340">
    <property type="reaction ID" value="UER00458"/>
</dbReference>
<dbReference type="Proteomes" id="UP000001167">
    <property type="component" value="Chromosome"/>
</dbReference>
<dbReference type="GO" id="GO:0005737">
    <property type="term" value="C:cytoplasm"/>
    <property type="evidence" value="ECO:0007669"/>
    <property type="project" value="UniProtKB-SubCell"/>
</dbReference>
<dbReference type="GO" id="GO:0008776">
    <property type="term" value="F:acetate kinase activity"/>
    <property type="evidence" value="ECO:0007669"/>
    <property type="project" value="UniProtKB-UniRule"/>
</dbReference>
<dbReference type="GO" id="GO:0005524">
    <property type="term" value="F:ATP binding"/>
    <property type="evidence" value="ECO:0007669"/>
    <property type="project" value="UniProtKB-KW"/>
</dbReference>
<dbReference type="GO" id="GO:0000287">
    <property type="term" value="F:magnesium ion binding"/>
    <property type="evidence" value="ECO:0007669"/>
    <property type="project" value="UniProtKB-UniRule"/>
</dbReference>
<dbReference type="GO" id="GO:0006083">
    <property type="term" value="P:acetate metabolic process"/>
    <property type="evidence" value="ECO:0007669"/>
    <property type="project" value="TreeGrafter"/>
</dbReference>
<dbReference type="GO" id="GO:0006085">
    <property type="term" value="P:acetyl-CoA biosynthetic process"/>
    <property type="evidence" value="ECO:0007669"/>
    <property type="project" value="UniProtKB-UniRule"/>
</dbReference>
<dbReference type="CDD" id="cd24010">
    <property type="entry name" value="ASKHA_NBD_AcK_PK"/>
    <property type="match status" value="1"/>
</dbReference>
<dbReference type="Gene3D" id="3.30.420.40">
    <property type="match status" value="2"/>
</dbReference>
<dbReference type="HAMAP" id="MF_00020">
    <property type="entry name" value="Acetate_kinase"/>
    <property type="match status" value="1"/>
</dbReference>
<dbReference type="InterPro" id="IPR004372">
    <property type="entry name" value="Ac/propionate_kinase"/>
</dbReference>
<dbReference type="InterPro" id="IPR000890">
    <property type="entry name" value="Aliphatic_acid_kin_short-chain"/>
</dbReference>
<dbReference type="InterPro" id="IPR023865">
    <property type="entry name" value="Aliphatic_acid_kinase_CS"/>
</dbReference>
<dbReference type="InterPro" id="IPR043129">
    <property type="entry name" value="ATPase_NBD"/>
</dbReference>
<dbReference type="NCBIfam" id="TIGR00016">
    <property type="entry name" value="ackA"/>
    <property type="match status" value="1"/>
</dbReference>
<dbReference type="PANTHER" id="PTHR21060">
    <property type="entry name" value="ACETATE KINASE"/>
    <property type="match status" value="1"/>
</dbReference>
<dbReference type="PANTHER" id="PTHR21060:SF15">
    <property type="entry name" value="ACETATE KINASE-RELATED"/>
    <property type="match status" value="1"/>
</dbReference>
<dbReference type="Pfam" id="PF00871">
    <property type="entry name" value="Acetate_kinase"/>
    <property type="match status" value="1"/>
</dbReference>
<dbReference type="PIRSF" id="PIRSF000722">
    <property type="entry name" value="Acetate_prop_kin"/>
    <property type="match status" value="1"/>
</dbReference>
<dbReference type="PRINTS" id="PR00471">
    <property type="entry name" value="ACETATEKNASE"/>
</dbReference>
<dbReference type="SUPFAM" id="SSF53067">
    <property type="entry name" value="Actin-like ATPase domain"/>
    <property type="match status" value="2"/>
</dbReference>
<dbReference type="PROSITE" id="PS01075">
    <property type="entry name" value="ACETATE_KINASE_1"/>
    <property type="match status" value="1"/>
</dbReference>
<dbReference type="PROSITE" id="PS01076">
    <property type="entry name" value="ACETATE_KINASE_2"/>
    <property type="match status" value="1"/>
</dbReference>
<evidence type="ECO:0000255" key="1">
    <source>
        <dbReference type="HAMAP-Rule" id="MF_00020"/>
    </source>
</evidence>
<protein>
    <recommendedName>
        <fullName evidence="1">Acetate kinase</fullName>
        <ecNumber evidence="1">2.7.2.1</ecNumber>
    </recommendedName>
    <alternativeName>
        <fullName evidence="1">Acetokinase</fullName>
    </alternativeName>
</protein>
<feature type="chain" id="PRO_0000107627" description="Acetate kinase">
    <location>
        <begin position="1"/>
        <end position="398"/>
    </location>
</feature>
<feature type="active site" description="Proton donor/acceptor" evidence="1">
    <location>
        <position position="146"/>
    </location>
</feature>
<feature type="binding site" evidence="1">
    <location>
        <position position="8"/>
    </location>
    <ligand>
        <name>Mg(2+)</name>
        <dbReference type="ChEBI" id="CHEBI:18420"/>
    </ligand>
</feature>
<feature type="binding site" evidence="1">
    <location>
        <position position="15"/>
    </location>
    <ligand>
        <name>ATP</name>
        <dbReference type="ChEBI" id="CHEBI:30616"/>
    </ligand>
</feature>
<feature type="binding site" evidence="1">
    <location>
        <position position="89"/>
    </location>
    <ligand>
        <name>substrate</name>
    </ligand>
</feature>
<feature type="binding site" evidence="1">
    <location>
        <begin position="206"/>
        <end position="210"/>
    </location>
    <ligand>
        <name>ATP</name>
        <dbReference type="ChEBI" id="CHEBI:30616"/>
    </ligand>
</feature>
<feature type="binding site" evidence="1">
    <location>
        <begin position="283"/>
        <end position="285"/>
    </location>
    <ligand>
        <name>ATP</name>
        <dbReference type="ChEBI" id="CHEBI:30616"/>
    </ligand>
</feature>
<feature type="binding site" evidence="1">
    <location>
        <begin position="331"/>
        <end position="335"/>
    </location>
    <ligand>
        <name>ATP</name>
        <dbReference type="ChEBI" id="CHEBI:30616"/>
    </ligand>
</feature>
<feature type="binding site" evidence="1">
    <location>
        <position position="383"/>
    </location>
    <ligand>
        <name>Mg(2+)</name>
        <dbReference type="ChEBI" id="CHEBI:18420"/>
    </ligand>
</feature>
<feature type="site" description="Transition state stabilizer" evidence="1">
    <location>
        <position position="178"/>
    </location>
</feature>
<feature type="site" description="Transition state stabilizer" evidence="1">
    <location>
        <position position="239"/>
    </location>
</feature>
<gene>
    <name evidence="1" type="primary">ackA</name>
    <name type="ordered locus">M6_Spy0142</name>
</gene>
<accession>Q5XE86</accession>
<comment type="function">
    <text evidence="1">Catalyzes the formation of acetyl phosphate from acetate and ATP. Can also catalyze the reverse reaction.</text>
</comment>
<comment type="catalytic activity">
    <reaction evidence="1">
        <text>acetate + ATP = acetyl phosphate + ADP</text>
        <dbReference type="Rhea" id="RHEA:11352"/>
        <dbReference type="ChEBI" id="CHEBI:22191"/>
        <dbReference type="ChEBI" id="CHEBI:30089"/>
        <dbReference type="ChEBI" id="CHEBI:30616"/>
        <dbReference type="ChEBI" id="CHEBI:456216"/>
        <dbReference type="EC" id="2.7.2.1"/>
    </reaction>
</comment>
<comment type="cofactor">
    <cofactor evidence="1">
        <name>Mg(2+)</name>
        <dbReference type="ChEBI" id="CHEBI:18420"/>
    </cofactor>
    <cofactor evidence="1">
        <name>Mn(2+)</name>
        <dbReference type="ChEBI" id="CHEBI:29035"/>
    </cofactor>
    <text evidence="1">Mg(2+). Can also accept Mn(2+).</text>
</comment>
<comment type="pathway">
    <text evidence="1">Metabolic intermediate biosynthesis; acetyl-CoA biosynthesis; acetyl-CoA from acetate: step 1/2.</text>
</comment>
<comment type="subunit">
    <text evidence="1">Homodimer.</text>
</comment>
<comment type="subcellular location">
    <subcellularLocation>
        <location evidence="1">Cytoplasm</location>
    </subcellularLocation>
</comment>
<comment type="similarity">
    <text evidence="1">Belongs to the acetokinase family.</text>
</comment>